<reference key="1">
    <citation type="journal article" date="2007" name="Proc. Natl. Acad. Sci. U.S.A.">
        <title>The tiny eukaryote Ostreococcus provides genomic insights into the paradox of plankton speciation.</title>
        <authorList>
            <person name="Palenik B."/>
            <person name="Grimwood J."/>
            <person name="Aerts A."/>
            <person name="Rouze P."/>
            <person name="Salamov A."/>
            <person name="Putnam N."/>
            <person name="Dupont C."/>
            <person name="Jorgensen R."/>
            <person name="Derelle E."/>
            <person name="Rombauts S."/>
            <person name="Zhou K."/>
            <person name="Otillar R."/>
            <person name="Merchant S.S."/>
            <person name="Podell S."/>
            <person name="Gaasterland T."/>
            <person name="Napoli C."/>
            <person name="Gendler K."/>
            <person name="Manuell A."/>
            <person name="Tai V."/>
            <person name="Vallon O."/>
            <person name="Piganeau G."/>
            <person name="Jancek S."/>
            <person name="Heijde M."/>
            <person name="Jabbari K."/>
            <person name="Bowler C."/>
            <person name="Lohr M."/>
            <person name="Robbens S."/>
            <person name="Werner G."/>
            <person name="Dubchak I."/>
            <person name="Pazour G.J."/>
            <person name="Ren Q."/>
            <person name="Paulsen I."/>
            <person name="Delwiche C."/>
            <person name="Schmutz J."/>
            <person name="Rokhsar D."/>
            <person name="Van de Peer Y."/>
            <person name="Moreau H."/>
            <person name="Grigoriev I.V."/>
        </authorList>
    </citation>
    <scope>NUCLEOTIDE SEQUENCE [LARGE SCALE GENOMIC DNA]</scope>
    <source>
        <strain>CCE9901</strain>
    </source>
</reference>
<feature type="chain" id="PRO_0000403524" description="Flap endonuclease 1">
    <location>
        <begin position="1"/>
        <end position="389"/>
    </location>
</feature>
<feature type="region of interest" description="N-domain">
    <location>
        <begin position="1"/>
        <end position="105"/>
    </location>
</feature>
<feature type="region of interest" description="I-domain">
    <location>
        <begin position="123"/>
        <end position="254"/>
    </location>
</feature>
<feature type="region of interest" description="Interaction with PCNA" evidence="1">
    <location>
        <begin position="338"/>
        <end position="346"/>
    </location>
</feature>
<feature type="region of interest" description="Disordered" evidence="2">
    <location>
        <begin position="356"/>
        <end position="389"/>
    </location>
</feature>
<feature type="binding site" evidence="1">
    <location>
        <position position="34"/>
    </location>
    <ligand>
        <name>Mg(2+)</name>
        <dbReference type="ChEBI" id="CHEBI:18420"/>
        <label>1</label>
    </ligand>
</feature>
<feature type="binding site" evidence="1">
    <location>
        <position position="71"/>
    </location>
    <ligand>
        <name>DNA</name>
        <dbReference type="ChEBI" id="CHEBI:16991"/>
    </ligand>
</feature>
<feature type="binding site" evidence="1">
    <location>
        <position position="87"/>
    </location>
    <ligand>
        <name>Mg(2+)</name>
        <dbReference type="ChEBI" id="CHEBI:18420"/>
        <label>1</label>
    </ligand>
</feature>
<feature type="binding site" evidence="1">
    <location>
        <position position="159"/>
    </location>
    <ligand>
        <name>DNA</name>
        <dbReference type="ChEBI" id="CHEBI:16991"/>
    </ligand>
</feature>
<feature type="binding site" evidence="1">
    <location>
        <position position="159"/>
    </location>
    <ligand>
        <name>Mg(2+)</name>
        <dbReference type="ChEBI" id="CHEBI:18420"/>
        <label>1</label>
    </ligand>
</feature>
<feature type="binding site" evidence="1">
    <location>
        <position position="161"/>
    </location>
    <ligand>
        <name>Mg(2+)</name>
        <dbReference type="ChEBI" id="CHEBI:18420"/>
        <label>1</label>
    </ligand>
</feature>
<feature type="binding site" evidence="1">
    <location>
        <position position="180"/>
    </location>
    <ligand>
        <name>Mg(2+)</name>
        <dbReference type="ChEBI" id="CHEBI:18420"/>
        <label>2</label>
    </ligand>
</feature>
<feature type="binding site" evidence="1">
    <location>
        <position position="182"/>
    </location>
    <ligand>
        <name>Mg(2+)</name>
        <dbReference type="ChEBI" id="CHEBI:18420"/>
        <label>2</label>
    </ligand>
</feature>
<feature type="binding site" evidence="1">
    <location>
        <position position="232"/>
    </location>
    <ligand>
        <name>DNA</name>
        <dbReference type="ChEBI" id="CHEBI:16991"/>
    </ligand>
</feature>
<feature type="binding site" evidence="1">
    <location>
        <position position="234"/>
    </location>
    <ligand>
        <name>DNA</name>
        <dbReference type="ChEBI" id="CHEBI:16991"/>
    </ligand>
</feature>
<feature type="binding site" evidence="1">
    <location>
        <position position="234"/>
    </location>
    <ligand>
        <name>Mg(2+)</name>
        <dbReference type="ChEBI" id="CHEBI:18420"/>
        <label>2</label>
    </ligand>
</feature>
<comment type="function">
    <text evidence="1">Structure-specific nuclease with 5'-flap endonuclease and 5'-3' exonuclease activities involved in DNA replication and repair. During DNA replication, cleaves the 5'-overhanging flap structure that is generated by displacement synthesis when DNA polymerase encounters the 5'-end of a downstream Okazaki fragment. It enters the flap from the 5'-end and then tracks to cleave the flap base, leaving a nick for ligation. Also involved in the long patch base excision repair (LP-BER) pathway, by cleaving within the apurinic/apyrimidinic (AP) site-terminated flap. Acts as a genome stabilization factor that prevents flaps from equilibrating into structures that lead to duplications and deletions. Also possesses 5'-3' exonuclease activity on nicked or gapped double-stranded DNA, and exhibits RNase H activity. Also involved in replication and repair of rDNA and in repairing mitochondrial DNA.</text>
</comment>
<comment type="cofactor">
    <cofactor evidence="1">
        <name>Mg(2+)</name>
        <dbReference type="ChEBI" id="CHEBI:18420"/>
    </cofactor>
    <text evidence="1">Binds 2 magnesium ions per subunit. They probably participate in the reaction catalyzed by the enzyme. May bind an additional third magnesium ion after substrate binding.</text>
</comment>
<comment type="subunit">
    <text evidence="1">Interacts with PCNA. Three molecules of FEN1 bind to one PCNA trimer with each molecule binding to one PCNA monomer. PCNA stimulates the nuclease activity without altering cleavage specificity.</text>
</comment>
<comment type="subcellular location">
    <subcellularLocation>
        <location evidence="1">Nucleus</location>
        <location evidence="1">Nucleolus</location>
    </subcellularLocation>
    <subcellularLocation>
        <location evidence="1">Nucleus</location>
        <location evidence="1">Nucleoplasm</location>
    </subcellularLocation>
    <subcellularLocation>
        <location evidence="1">Mitochondrion</location>
    </subcellularLocation>
    <text evidence="1">Resides mostly in the nucleoli and relocalizes to the nucleoplasm upon DNA damage.</text>
</comment>
<comment type="PTM">
    <text evidence="1">Phosphorylated. Phosphorylation upon DNA damage induces relocalization to the nuclear plasma.</text>
</comment>
<comment type="similarity">
    <text evidence="1">Belongs to the XPG/RAD2 endonuclease family. FEN1 subfamily.</text>
</comment>
<evidence type="ECO:0000255" key="1">
    <source>
        <dbReference type="HAMAP-Rule" id="MF_03140"/>
    </source>
</evidence>
<evidence type="ECO:0000256" key="2">
    <source>
        <dbReference type="SAM" id="MobiDB-lite"/>
    </source>
</evidence>
<accession>A4S1G4</accession>
<keyword id="KW-0227">DNA damage</keyword>
<keyword id="KW-0234">DNA repair</keyword>
<keyword id="KW-0235">DNA replication</keyword>
<keyword id="KW-0255">Endonuclease</keyword>
<keyword id="KW-0269">Exonuclease</keyword>
<keyword id="KW-0378">Hydrolase</keyword>
<keyword id="KW-0460">Magnesium</keyword>
<keyword id="KW-0479">Metal-binding</keyword>
<keyword id="KW-0496">Mitochondrion</keyword>
<keyword id="KW-0540">Nuclease</keyword>
<keyword id="KW-0539">Nucleus</keyword>
<keyword id="KW-0597">Phosphoprotein</keyword>
<keyword id="KW-1185">Reference proteome</keyword>
<gene>
    <name evidence="1" type="primary">FEN1</name>
    <name type="ORF">OSTLU_42373</name>
</gene>
<dbReference type="EC" id="3.1.-.-" evidence="1"/>
<dbReference type="EMBL" id="CP000588">
    <property type="protein sequence ID" value="ABO97437.1"/>
    <property type="molecule type" value="Genomic_DNA"/>
</dbReference>
<dbReference type="RefSeq" id="XP_001419144.1">
    <property type="nucleotide sequence ID" value="XM_001419107.1"/>
</dbReference>
<dbReference type="SMR" id="A4S1G4"/>
<dbReference type="STRING" id="436017.A4S1G4"/>
<dbReference type="EnsemblPlants" id="ABO97437">
    <property type="protein sequence ID" value="ABO97437"/>
    <property type="gene ID" value="OSTLU_42373"/>
</dbReference>
<dbReference type="GeneID" id="5003467"/>
<dbReference type="Gramene" id="ABO97437">
    <property type="protein sequence ID" value="ABO97437"/>
    <property type="gene ID" value="OSTLU_42373"/>
</dbReference>
<dbReference type="KEGG" id="olu:OSTLU_42373"/>
<dbReference type="eggNOG" id="KOG2519">
    <property type="taxonomic scope" value="Eukaryota"/>
</dbReference>
<dbReference type="HOGENOM" id="CLU_032444_2_0_1"/>
<dbReference type="OMA" id="MGIPWVQ"/>
<dbReference type="OrthoDB" id="1937206at2759"/>
<dbReference type="Proteomes" id="UP000001568">
    <property type="component" value="Chromosome 8"/>
</dbReference>
<dbReference type="GO" id="GO:0005739">
    <property type="term" value="C:mitochondrion"/>
    <property type="evidence" value="ECO:0007669"/>
    <property type="project" value="UniProtKB-SubCell"/>
</dbReference>
<dbReference type="GO" id="GO:0005730">
    <property type="term" value="C:nucleolus"/>
    <property type="evidence" value="ECO:0007669"/>
    <property type="project" value="UniProtKB-SubCell"/>
</dbReference>
<dbReference type="GO" id="GO:0005654">
    <property type="term" value="C:nucleoplasm"/>
    <property type="evidence" value="ECO:0007669"/>
    <property type="project" value="UniProtKB-SubCell"/>
</dbReference>
<dbReference type="GO" id="GO:0008409">
    <property type="term" value="F:5'-3' exonuclease activity"/>
    <property type="evidence" value="ECO:0007669"/>
    <property type="project" value="UniProtKB-UniRule"/>
</dbReference>
<dbReference type="GO" id="GO:0017108">
    <property type="term" value="F:5'-flap endonuclease activity"/>
    <property type="evidence" value="ECO:0007669"/>
    <property type="project" value="UniProtKB-UniRule"/>
</dbReference>
<dbReference type="GO" id="GO:0003677">
    <property type="term" value="F:DNA binding"/>
    <property type="evidence" value="ECO:0007669"/>
    <property type="project" value="UniProtKB-UniRule"/>
</dbReference>
<dbReference type="GO" id="GO:0000287">
    <property type="term" value="F:magnesium ion binding"/>
    <property type="evidence" value="ECO:0007669"/>
    <property type="project" value="UniProtKB-UniRule"/>
</dbReference>
<dbReference type="GO" id="GO:0006284">
    <property type="term" value="P:base-excision repair"/>
    <property type="evidence" value="ECO:0007669"/>
    <property type="project" value="UniProtKB-UniRule"/>
</dbReference>
<dbReference type="GO" id="GO:0043137">
    <property type="term" value="P:DNA replication, removal of RNA primer"/>
    <property type="evidence" value="ECO:0007669"/>
    <property type="project" value="UniProtKB-UniRule"/>
</dbReference>
<dbReference type="CDD" id="cd09867">
    <property type="entry name" value="PIN_FEN1"/>
    <property type="match status" value="1"/>
</dbReference>
<dbReference type="FunFam" id="1.10.150.20:FF:000009">
    <property type="entry name" value="Flap endonuclease 1"/>
    <property type="match status" value="1"/>
</dbReference>
<dbReference type="FunFam" id="3.40.50.1010:FF:000016">
    <property type="entry name" value="Flap endonuclease 1"/>
    <property type="match status" value="1"/>
</dbReference>
<dbReference type="Gene3D" id="1.10.150.20">
    <property type="entry name" value="5' to 3' exonuclease, C-terminal subdomain"/>
    <property type="match status" value="1"/>
</dbReference>
<dbReference type="Gene3D" id="3.40.50.1010">
    <property type="entry name" value="5'-nuclease"/>
    <property type="match status" value="1"/>
</dbReference>
<dbReference type="HAMAP" id="MF_00614">
    <property type="entry name" value="Fen"/>
    <property type="match status" value="1"/>
</dbReference>
<dbReference type="InterPro" id="IPR002421">
    <property type="entry name" value="5-3_exonuclease"/>
</dbReference>
<dbReference type="InterPro" id="IPR036279">
    <property type="entry name" value="5-3_exonuclease_C_sf"/>
</dbReference>
<dbReference type="InterPro" id="IPR023426">
    <property type="entry name" value="Flap_endonuc"/>
</dbReference>
<dbReference type="InterPro" id="IPR008918">
    <property type="entry name" value="HhH2"/>
</dbReference>
<dbReference type="InterPro" id="IPR029060">
    <property type="entry name" value="PIN-like_dom_sf"/>
</dbReference>
<dbReference type="InterPro" id="IPR006086">
    <property type="entry name" value="XPG-I_dom"/>
</dbReference>
<dbReference type="InterPro" id="IPR006084">
    <property type="entry name" value="XPG/Rad2"/>
</dbReference>
<dbReference type="InterPro" id="IPR019974">
    <property type="entry name" value="XPG_CS"/>
</dbReference>
<dbReference type="InterPro" id="IPR006085">
    <property type="entry name" value="XPG_DNA_repair_N"/>
</dbReference>
<dbReference type="PANTHER" id="PTHR11081:SF9">
    <property type="entry name" value="FLAP ENDONUCLEASE 1"/>
    <property type="match status" value="1"/>
</dbReference>
<dbReference type="PANTHER" id="PTHR11081">
    <property type="entry name" value="FLAP ENDONUCLEASE FAMILY MEMBER"/>
    <property type="match status" value="1"/>
</dbReference>
<dbReference type="Pfam" id="PF00867">
    <property type="entry name" value="XPG_I"/>
    <property type="match status" value="1"/>
</dbReference>
<dbReference type="Pfam" id="PF00752">
    <property type="entry name" value="XPG_N"/>
    <property type="match status" value="1"/>
</dbReference>
<dbReference type="PRINTS" id="PR00853">
    <property type="entry name" value="XPGRADSUPER"/>
</dbReference>
<dbReference type="SMART" id="SM00475">
    <property type="entry name" value="53EXOc"/>
    <property type="match status" value="1"/>
</dbReference>
<dbReference type="SMART" id="SM00279">
    <property type="entry name" value="HhH2"/>
    <property type="match status" value="1"/>
</dbReference>
<dbReference type="SMART" id="SM00484">
    <property type="entry name" value="XPGI"/>
    <property type="match status" value="1"/>
</dbReference>
<dbReference type="SMART" id="SM00485">
    <property type="entry name" value="XPGN"/>
    <property type="match status" value="1"/>
</dbReference>
<dbReference type="SUPFAM" id="SSF47807">
    <property type="entry name" value="5' to 3' exonuclease, C-terminal subdomain"/>
    <property type="match status" value="1"/>
</dbReference>
<dbReference type="SUPFAM" id="SSF88723">
    <property type="entry name" value="PIN domain-like"/>
    <property type="match status" value="1"/>
</dbReference>
<dbReference type="PROSITE" id="PS00841">
    <property type="entry name" value="XPG_1"/>
    <property type="match status" value="1"/>
</dbReference>
<proteinExistence type="inferred from homology"/>
<protein>
    <recommendedName>
        <fullName evidence="1">Flap endonuclease 1</fullName>
        <shortName evidence="1">FEN-1</shortName>
        <ecNumber evidence="1">3.1.-.-</ecNumber>
    </recommendedName>
    <alternativeName>
        <fullName evidence="1">Flap structure-specific endonuclease 1</fullName>
    </alternativeName>
</protein>
<organism>
    <name type="scientific">Ostreococcus lucimarinus (strain CCE9901)</name>
    <dbReference type="NCBI Taxonomy" id="436017"/>
    <lineage>
        <taxon>Eukaryota</taxon>
        <taxon>Viridiplantae</taxon>
        <taxon>Chlorophyta</taxon>
        <taxon>Mamiellophyceae</taxon>
        <taxon>Mamiellales</taxon>
        <taxon>Bathycoccaceae</taxon>
        <taxon>Ostreococcus</taxon>
    </lineage>
</organism>
<sequence>MGIKGLTALMRDNAPGAIKEQKFESYLDRRVAIDASMHIYQFMMVVGRQGEQQLTNEAGEVTSHLQGMLNRTCRMLEAGIKPIYVFDGKPPVMKGGELAKRKDKREEAEAALKAAREAGNQEEVEKLSKRTVRVSKQHSQEVMKLASLLGVPVFEAPCEAEASCAAMCKAGLVWAVATEDMDTLTFAAPRLARNLMAPKSQDKPVLEFDYDKVLAGLGLTPEQFIDMCILCGCDYCDTIRGIGPKTALKLIKEHGSIEKILEEIDTEKYPPPQDWDFAGARELFKNPEVMDTTGIALSWKAPNEEGLIDFLVKEKQFNEERVRAVCAKVKKARQGKASQNRLESFFGPPTIISSTIGKRKVEEKKGKNGKAGLANKKSKGVSGFRRSKN</sequence>
<name>FEN1_OSTLU</name>